<gene>
    <name type="primary">ARP5</name>
    <name type="ordered locus">YNL059C</name>
    <name type="ORF">N2430</name>
    <name type="ORF">YNL2430C</name>
</gene>
<protein>
    <recommendedName>
        <fullName>Actin-related protein 5</fullName>
    </recommendedName>
    <alternativeName>
        <fullName>Actin-like protein ARP5</fullName>
    </alternativeName>
</protein>
<reference key="1">
    <citation type="journal article" date="1995" name="Yeast">
        <title>The sequence of a 44 420 bp fragment located on the left arm of chromosome XIV from Saccharomyces cerevisiae.</title>
        <authorList>
            <person name="Bergez P."/>
            <person name="Doignon F."/>
            <person name="Crouzet M."/>
        </authorList>
    </citation>
    <scope>NUCLEOTIDE SEQUENCE [GENOMIC DNA]</scope>
    <source>
        <strain>S288c / FY1676</strain>
    </source>
</reference>
<reference key="2">
    <citation type="journal article" date="1996" name="Yeast">
        <authorList>
            <person name="Bergez P."/>
            <person name="Doignon F."/>
            <person name="Crouzet M."/>
        </authorList>
    </citation>
    <scope>ERRATUM OF PUBMED:8533472</scope>
</reference>
<reference key="3">
    <citation type="journal article" date="1997" name="Nature">
        <title>The nucleotide sequence of Saccharomyces cerevisiae chromosome XIV and its evolutionary implications.</title>
        <authorList>
            <person name="Philippsen P."/>
            <person name="Kleine K."/>
            <person name="Poehlmann R."/>
            <person name="Duesterhoeft A."/>
            <person name="Hamberg K."/>
            <person name="Hegemann J.H."/>
            <person name="Obermaier B."/>
            <person name="Urrestarazu L.A."/>
            <person name="Aert R."/>
            <person name="Albermann K."/>
            <person name="Altmann R."/>
            <person name="Andre B."/>
            <person name="Baladron V."/>
            <person name="Ballesta J.P.G."/>
            <person name="Becam A.-M."/>
            <person name="Beinhauer J.D."/>
            <person name="Boskovic J."/>
            <person name="Buitrago M.J."/>
            <person name="Bussereau F."/>
            <person name="Coster F."/>
            <person name="Crouzet M."/>
            <person name="D'Angelo M."/>
            <person name="Dal Pero F."/>
            <person name="De Antoni A."/>
            <person name="del Rey F."/>
            <person name="Doignon F."/>
            <person name="Domdey H."/>
            <person name="Dubois E."/>
            <person name="Fiedler T.A."/>
            <person name="Fleig U."/>
            <person name="Floeth M."/>
            <person name="Fritz C."/>
            <person name="Gaillardin C."/>
            <person name="Garcia-Cantalejo J.M."/>
            <person name="Glansdorff N."/>
            <person name="Goffeau A."/>
            <person name="Gueldener U."/>
            <person name="Herbert C.J."/>
            <person name="Heumann K."/>
            <person name="Heuss-Neitzel D."/>
            <person name="Hilbert H."/>
            <person name="Hinni K."/>
            <person name="Iraqui Houssaini I."/>
            <person name="Jacquet M."/>
            <person name="Jimenez A."/>
            <person name="Jonniaux J.-L."/>
            <person name="Karpfinger-Hartl L."/>
            <person name="Lanfranchi G."/>
            <person name="Lepingle A."/>
            <person name="Levesque H."/>
            <person name="Lyck R."/>
            <person name="Maftahi M."/>
            <person name="Mallet L."/>
            <person name="Maurer C.T.C."/>
            <person name="Messenguy F."/>
            <person name="Mewes H.-W."/>
            <person name="Moestl D."/>
            <person name="Nasr F."/>
            <person name="Nicaud J.-M."/>
            <person name="Niedenthal R.K."/>
            <person name="Pandolfo D."/>
            <person name="Pierard A."/>
            <person name="Piravandi E."/>
            <person name="Planta R.J."/>
            <person name="Pohl T.M."/>
            <person name="Purnelle B."/>
            <person name="Rebischung C."/>
            <person name="Remacha M.A."/>
            <person name="Revuelta J.L."/>
            <person name="Rinke M."/>
            <person name="Saiz J.E."/>
            <person name="Sartorello F."/>
            <person name="Scherens B."/>
            <person name="Sen-Gupta M."/>
            <person name="Soler-Mira A."/>
            <person name="Urbanus J.H.M."/>
            <person name="Valle G."/>
            <person name="Van Dyck L."/>
            <person name="Verhasselt P."/>
            <person name="Vierendeels F."/>
            <person name="Vissers S."/>
            <person name="Voet M."/>
            <person name="Volckaert G."/>
            <person name="Wach A."/>
            <person name="Wambutt R."/>
            <person name="Wedler H."/>
            <person name="Zollner A."/>
            <person name="Hani J."/>
        </authorList>
    </citation>
    <scope>NUCLEOTIDE SEQUENCE [LARGE SCALE GENOMIC DNA]</scope>
    <source>
        <strain>ATCC 204508 / S288c</strain>
    </source>
</reference>
<reference key="4">
    <citation type="journal article" date="2014" name="G3 (Bethesda)">
        <title>The reference genome sequence of Saccharomyces cerevisiae: Then and now.</title>
        <authorList>
            <person name="Engel S.R."/>
            <person name="Dietrich F.S."/>
            <person name="Fisk D.G."/>
            <person name="Binkley G."/>
            <person name="Balakrishnan R."/>
            <person name="Costanzo M.C."/>
            <person name="Dwight S.S."/>
            <person name="Hitz B.C."/>
            <person name="Karra K."/>
            <person name="Nash R.S."/>
            <person name="Weng S."/>
            <person name="Wong E.D."/>
            <person name="Lloyd P."/>
            <person name="Skrzypek M.S."/>
            <person name="Miyasato S.R."/>
            <person name="Simison M."/>
            <person name="Cherry J.M."/>
        </authorList>
    </citation>
    <scope>GENOME REANNOTATION</scope>
    <source>
        <strain>ATCC 204508 / S288c</strain>
    </source>
</reference>
<reference key="5">
    <citation type="journal article" date="1997" name="Yeast">
        <title>Who's who among the Saccharomyces cerevisiae actin-related proteins? A classification and nomenclature proposal for a large family.</title>
        <authorList>
            <person name="Poch O."/>
            <person name="Winsor B."/>
        </authorList>
    </citation>
    <scope>GENE NAME</scope>
</reference>
<reference key="6">
    <citation type="journal article" date="2003" name="Mol. Cell">
        <title>Involvement of actin-related proteins in ATP-dependent chromatin remodeling.</title>
        <authorList>
            <person name="Shen X."/>
            <person name="Ranallo R."/>
            <person name="Choi E."/>
            <person name="Wu C."/>
        </authorList>
    </citation>
    <scope>IDENTIFICATION IN THE INO80 COMPLEX</scope>
    <scope>IDENTIFICATION BY MASS SPECTROMETRY</scope>
</reference>
<reference key="7">
    <citation type="journal article" date="2003" name="Nature">
        <title>Global analysis of protein expression in yeast.</title>
        <authorList>
            <person name="Ghaemmaghami S."/>
            <person name="Huh W.-K."/>
            <person name="Bower K."/>
            <person name="Howson R.W."/>
            <person name="Belle A."/>
            <person name="Dephoure N."/>
            <person name="O'Shea E.K."/>
            <person name="Weissman J.S."/>
        </authorList>
    </citation>
    <scope>LEVEL OF PROTEIN EXPRESSION [LARGE SCALE ANALYSIS]</scope>
</reference>
<reference key="8">
    <citation type="journal article" date="2008" name="Mol. Cell. Proteomics">
        <title>A multidimensional chromatography technology for in-depth phosphoproteome analysis.</title>
        <authorList>
            <person name="Albuquerque C.P."/>
            <person name="Smolka M.B."/>
            <person name="Payne S.H."/>
            <person name="Bafna V."/>
            <person name="Eng J."/>
            <person name="Zhou H."/>
        </authorList>
    </citation>
    <scope>PHOSPHORYLATION [LARGE SCALE ANALYSIS] AT THR-24</scope>
    <scope>IDENTIFICATION BY MASS SPECTROMETRY [LARGE SCALE ANALYSIS]</scope>
</reference>
<reference key="9">
    <citation type="journal article" date="2009" name="Science">
        <title>Global analysis of Cdk1 substrate phosphorylation sites provides insights into evolution.</title>
        <authorList>
            <person name="Holt L.J."/>
            <person name="Tuch B.B."/>
            <person name="Villen J."/>
            <person name="Johnson A.D."/>
            <person name="Gygi S.P."/>
            <person name="Morgan D.O."/>
        </authorList>
    </citation>
    <scope>PHOSPHORYLATION [LARGE SCALE ANALYSIS] AT SER-7 AND SER-383</scope>
    <scope>IDENTIFICATION BY MASS SPECTROMETRY [LARGE SCALE ANALYSIS]</scope>
</reference>
<reference key="10">
    <citation type="journal article" date="2012" name="Proteomics">
        <title>Sites of ubiquitin attachment in Saccharomyces cerevisiae.</title>
        <authorList>
            <person name="Starita L.M."/>
            <person name="Lo R.S."/>
            <person name="Eng J.K."/>
            <person name="von Haller P.D."/>
            <person name="Fields S."/>
        </authorList>
    </citation>
    <scope>UBIQUITINATION [LARGE SCALE ANALYSIS] AT LYS-12</scope>
    <scope>IDENTIFICATION BY MASS SPECTROMETRY [LARGE SCALE ANALYSIS]</scope>
</reference>
<feature type="chain" id="PRO_0000089104" description="Actin-related protein 5">
    <location>
        <begin position="1"/>
        <end position="755"/>
    </location>
</feature>
<feature type="region of interest" description="Disordered" evidence="1">
    <location>
        <begin position="418"/>
        <end position="444"/>
    </location>
</feature>
<feature type="compositionally biased region" description="Basic and acidic residues" evidence="1">
    <location>
        <begin position="425"/>
        <end position="444"/>
    </location>
</feature>
<feature type="modified residue" description="Phosphoserine" evidence="6">
    <location>
        <position position="7"/>
    </location>
</feature>
<feature type="modified residue" description="Phosphothreonine" evidence="5">
    <location>
        <position position="24"/>
    </location>
</feature>
<feature type="modified residue" description="Phosphoserine" evidence="6">
    <location>
        <position position="383"/>
    </location>
</feature>
<feature type="cross-link" description="Glycyl lysine isopeptide (Lys-Gly) (interchain with G-Cter in ubiquitin)" evidence="7">
    <location>
        <position position="12"/>
    </location>
</feature>
<comment type="function">
    <text>Probably involved in transcription regulation via its interaction with the INO80 complex, a chromatin remodeling complex.</text>
</comment>
<comment type="subunit">
    <text evidence="2">Component of the chromatin-remodeling INO80 complex, at least composed of ARP4, ARP5, ARP8, RVB1, RVB2, TAF14, NHP10, IES1, IES3, IES4, IES6, ACT1, IES2, IES5 and INO80.</text>
</comment>
<comment type="subcellular location">
    <subcellularLocation>
        <location>Nucleus</location>
    </subcellularLocation>
</comment>
<comment type="miscellaneous">
    <text evidence="3">Present with 2170 molecules/cell in log phase SD medium.</text>
</comment>
<comment type="similarity">
    <text evidence="4">Belongs to the actin family.</text>
</comment>
<dbReference type="EMBL" id="U12141">
    <property type="protein sequence ID" value="AAA99652.1"/>
    <property type="molecule type" value="Genomic_DNA"/>
</dbReference>
<dbReference type="EMBL" id="Z71335">
    <property type="protein sequence ID" value="CAA95933.1"/>
    <property type="molecule type" value="Genomic_DNA"/>
</dbReference>
<dbReference type="EMBL" id="BK006947">
    <property type="protein sequence ID" value="DAA10486.1"/>
    <property type="molecule type" value="Genomic_DNA"/>
</dbReference>
<dbReference type="PIR" id="S58718">
    <property type="entry name" value="S58718"/>
</dbReference>
<dbReference type="RefSeq" id="NP_014339.1">
    <property type="nucleotide sequence ID" value="NM_001182898.1"/>
</dbReference>
<dbReference type="PDB" id="8ETS">
    <property type="method" value="EM"/>
    <property type="resolution" value="3.04 A"/>
    <property type="chains" value="R=12-755"/>
</dbReference>
<dbReference type="PDB" id="8ETU">
    <property type="method" value="EM"/>
    <property type="resolution" value="2.80 A"/>
    <property type="chains" value="R=12-755"/>
</dbReference>
<dbReference type="PDB" id="8ETW">
    <property type="method" value="EM"/>
    <property type="resolution" value="2.64 A"/>
    <property type="chains" value="R=12-755"/>
</dbReference>
<dbReference type="PDB" id="8EU9">
    <property type="method" value="EM"/>
    <property type="resolution" value="3.48 A"/>
    <property type="chains" value="R=1-755"/>
</dbReference>
<dbReference type="PDB" id="8EUF">
    <property type="method" value="EM"/>
    <property type="resolution" value="3.41 A"/>
    <property type="chains" value="R=1-755"/>
</dbReference>
<dbReference type="PDBsum" id="8ETS"/>
<dbReference type="PDBsum" id="8ETU"/>
<dbReference type="PDBsum" id="8ETW"/>
<dbReference type="PDBsum" id="8EU9"/>
<dbReference type="PDBsum" id="8EUF"/>
<dbReference type="EMDB" id="EMD-28597"/>
<dbReference type="EMDB" id="EMD-28599"/>
<dbReference type="EMDB" id="EMD-28601"/>
<dbReference type="EMDB" id="EMD-28609"/>
<dbReference type="EMDB" id="EMD-28613"/>
<dbReference type="SMR" id="P53946"/>
<dbReference type="BioGRID" id="35763">
    <property type="interactions" value="70"/>
</dbReference>
<dbReference type="ComplexPortal" id="CPX-863">
    <property type="entry name" value="INO80 chromatin remodeling complex"/>
</dbReference>
<dbReference type="FunCoup" id="P53946">
    <property type="interactions" value="832"/>
</dbReference>
<dbReference type="IntAct" id="P53946">
    <property type="interactions" value="38"/>
</dbReference>
<dbReference type="MINT" id="P53946"/>
<dbReference type="STRING" id="4932.YNL059C"/>
<dbReference type="iPTMnet" id="P53946"/>
<dbReference type="PaxDb" id="4932-YNL059C"/>
<dbReference type="PeptideAtlas" id="P53946"/>
<dbReference type="EnsemblFungi" id="YNL059C_mRNA">
    <property type="protein sequence ID" value="YNL059C"/>
    <property type="gene ID" value="YNL059C"/>
</dbReference>
<dbReference type="GeneID" id="855665"/>
<dbReference type="KEGG" id="sce:YNL059C"/>
<dbReference type="AGR" id="SGD:S000005004"/>
<dbReference type="SGD" id="S000005004">
    <property type="gene designation" value="ARP5"/>
</dbReference>
<dbReference type="VEuPathDB" id="FungiDB:YNL059C"/>
<dbReference type="eggNOG" id="KOG0681">
    <property type="taxonomic scope" value="Eukaryota"/>
</dbReference>
<dbReference type="GeneTree" id="ENSGT00720000108866"/>
<dbReference type="HOGENOM" id="CLU_008246_1_0_1"/>
<dbReference type="InParanoid" id="P53946"/>
<dbReference type="OMA" id="YPFTEHV"/>
<dbReference type="OrthoDB" id="7340501at2759"/>
<dbReference type="BioCyc" id="YEAST:G3O-33090-MONOMER"/>
<dbReference type="BioGRID-ORCS" id="855665">
    <property type="hits" value="8 hits in 10 CRISPR screens"/>
</dbReference>
<dbReference type="PRO" id="PR:P53946"/>
<dbReference type="Proteomes" id="UP000002311">
    <property type="component" value="Chromosome XIV"/>
</dbReference>
<dbReference type="RNAct" id="P53946">
    <property type="molecule type" value="protein"/>
</dbReference>
<dbReference type="GO" id="GO:0005737">
    <property type="term" value="C:cytoplasm"/>
    <property type="evidence" value="ECO:0000318"/>
    <property type="project" value="GO_Central"/>
</dbReference>
<dbReference type="GO" id="GO:0031011">
    <property type="term" value="C:Ino80 complex"/>
    <property type="evidence" value="ECO:0000314"/>
    <property type="project" value="SGD"/>
</dbReference>
<dbReference type="GO" id="GO:0005634">
    <property type="term" value="C:nucleus"/>
    <property type="evidence" value="ECO:0000314"/>
    <property type="project" value="SGD"/>
</dbReference>
<dbReference type="GO" id="GO:0030234">
    <property type="term" value="F:enzyme regulator activity"/>
    <property type="evidence" value="ECO:0000314"/>
    <property type="project" value="SGD"/>
</dbReference>
<dbReference type="GO" id="GO:0006338">
    <property type="term" value="P:chromatin remodeling"/>
    <property type="evidence" value="ECO:0000314"/>
    <property type="project" value="SGD"/>
</dbReference>
<dbReference type="GO" id="GO:0006281">
    <property type="term" value="P:DNA repair"/>
    <property type="evidence" value="ECO:0000303"/>
    <property type="project" value="ComplexPortal"/>
</dbReference>
<dbReference type="GO" id="GO:0006355">
    <property type="term" value="P:regulation of DNA-templated transcription"/>
    <property type="evidence" value="ECO:0000318"/>
    <property type="project" value="GO_Central"/>
</dbReference>
<dbReference type="CDD" id="cd10211">
    <property type="entry name" value="ASKHA_NBD_Arp5"/>
    <property type="match status" value="1"/>
</dbReference>
<dbReference type="FunFam" id="3.30.420.40:FF:000287">
    <property type="entry name" value="Actin-related protein"/>
    <property type="match status" value="1"/>
</dbReference>
<dbReference type="FunFam" id="3.30.420.40:FF:000048">
    <property type="entry name" value="ARP5 actin-related protein 5 homolog"/>
    <property type="match status" value="1"/>
</dbReference>
<dbReference type="FunFam" id="3.30.420.40:FF:000139">
    <property type="entry name" value="Chromatin remodeling complex subunit (Arp5)"/>
    <property type="match status" value="1"/>
</dbReference>
<dbReference type="FunFam" id="3.90.640.10:FF:000025">
    <property type="entry name" value="Chromatin remodeling complex subunit (Arp5)"/>
    <property type="match status" value="1"/>
</dbReference>
<dbReference type="FunFam" id="3.30.420.40:FF:000058">
    <property type="entry name" value="Putative actin-related protein 5"/>
    <property type="match status" value="1"/>
</dbReference>
<dbReference type="Gene3D" id="3.30.420.40">
    <property type="match status" value="4"/>
</dbReference>
<dbReference type="Gene3D" id="3.90.640.10">
    <property type="entry name" value="Actin, Chain A, domain 4"/>
    <property type="match status" value="2"/>
</dbReference>
<dbReference type="InterPro" id="IPR004000">
    <property type="entry name" value="Actin"/>
</dbReference>
<dbReference type="InterPro" id="IPR043129">
    <property type="entry name" value="ATPase_NBD"/>
</dbReference>
<dbReference type="PANTHER" id="PTHR11937">
    <property type="entry name" value="ACTIN"/>
    <property type="match status" value="1"/>
</dbReference>
<dbReference type="Pfam" id="PF00022">
    <property type="entry name" value="Actin"/>
    <property type="match status" value="2"/>
</dbReference>
<dbReference type="SMART" id="SM00268">
    <property type="entry name" value="ACTIN"/>
    <property type="match status" value="1"/>
</dbReference>
<dbReference type="SUPFAM" id="SSF53067">
    <property type="entry name" value="Actin-like ATPase domain"/>
    <property type="match status" value="2"/>
</dbReference>
<accession>P53946</accession>
<accession>D6W1C0</accession>
<sequence>MSSRDASLTPLKAVVIDDPPLRQTPEPFDEQSAYNPQSPIAIDFGSSKLRAGFVNHATPTHIFPNALTKFRDRKLNKNFTFVGNDTLLDQAVRSQSRSPFDGPFVTNWNLTEEILDYTFHHLGVVPDNGIPNPILLTERLATVQSQRTNWYQILFETYNVPGVTFGIDSLFSFYNYNPSGNKTGLVISCGHEDTNVIPVVDGAGILTDAKRINWGGHQAVDYLNDLMALKYPYFPTKMSYLQYETMYKDYCYVSRNYDEDIEKILTLENLDTNDVVVEAPFTEVLQPQKTEEELRIQAEKRKETGKRLQEQARLKRMEKLVQKQEEFEYFSKVRDQLIDEPKKKVLSVLQNAGFDDERDFKKYLHSLEQSLKKAQMVEAEDDSHLDEMNEDKTAQKFDLLDIADEDLNEDQIKEKRKQRFLKASQDARQKAKEEKERVAKEEEEKKLKEQQWRETDLNGWIKDKRLKLNKLIKRRKEKLKLRDEMKDRKSQVSQNRMKNLASLAEDNVKQGAKRNRHQATIDNDPNDTFGANDEDWLIYTDITQNPEAFEEALEYEYKDIVELERLLLEHDPNFTEEDTLEAQYDWRNSILHLFLRGPRPHDSENIHEQHQMHLNVERIRVPEVIFQPTMGGQDQAGICELSETILLKKFGSQPGKLSQTSIDMVNNVLITGGNAKVPGLKERIVKEFTGFLPTGTNITVNMSSDPSLDAWKGMAALARNEEQYRKTVISKKEYEEYGPEYIKEHKLGNTKYFED</sequence>
<proteinExistence type="evidence at protein level"/>
<keyword id="KW-0002">3D-structure</keyword>
<keyword id="KW-1017">Isopeptide bond</keyword>
<keyword id="KW-0539">Nucleus</keyword>
<keyword id="KW-0597">Phosphoprotein</keyword>
<keyword id="KW-1185">Reference proteome</keyword>
<keyword id="KW-0804">Transcription</keyword>
<keyword id="KW-0805">Transcription regulation</keyword>
<keyword id="KW-0832">Ubl conjugation</keyword>
<evidence type="ECO:0000256" key="1">
    <source>
        <dbReference type="SAM" id="MobiDB-lite"/>
    </source>
</evidence>
<evidence type="ECO:0000269" key="2">
    <source>
    </source>
</evidence>
<evidence type="ECO:0000269" key="3">
    <source>
    </source>
</evidence>
<evidence type="ECO:0000305" key="4"/>
<evidence type="ECO:0007744" key="5">
    <source>
    </source>
</evidence>
<evidence type="ECO:0007744" key="6">
    <source>
    </source>
</evidence>
<evidence type="ECO:0007744" key="7">
    <source>
    </source>
</evidence>
<organism>
    <name type="scientific">Saccharomyces cerevisiae (strain ATCC 204508 / S288c)</name>
    <name type="common">Baker's yeast</name>
    <dbReference type="NCBI Taxonomy" id="559292"/>
    <lineage>
        <taxon>Eukaryota</taxon>
        <taxon>Fungi</taxon>
        <taxon>Dikarya</taxon>
        <taxon>Ascomycota</taxon>
        <taxon>Saccharomycotina</taxon>
        <taxon>Saccharomycetes</taxon>
        <taxon>Saccharomycetales</taxon>
        <taxon>Saccharomycetaceae</taxon>
        <taxon>Saccharomyces</taxon>
    </lineage>
</organism>
<name>ARP5_YEAST</name>